<organism>
    <name type="scientific">Salmonella paratyphi A (strain AKU_12601)</name>
    <dbReference type="NCBI Taxonomy" id="554290"/>
    <lineage>
        <taxon>Bacteria</taxon>
        <taxon>Pseudomonadati</taxon>
        <taxon>Pseudomonadota</taxon>
        <taxon>Gammaproteobacteria</taxon>
        <taxon>Enterobacterales</taxon>
        <taxon>Enterobacteriaceae</taxon>
        <taxon>Salmonella</taxon>
    </lineage>
</organism>
<feature type="chain" id="PRO_1000141612" description="Large ribosomal subunit protein uL2">
    <location>
        <begin position="1"/>
        <end position="273"/>
    </location>
</feature>
<feature type="region of interest" description="Disordered" evidence="2">
    <location>
        <begin position="28"/>
        <end position="53"/>
    </location>
</feature>
<feature type="region of interest" description="Disordered" evidence="2">
    <location>
        <begin position="221"/>
        <end position="273"/>
    </location>
</feature>
<feature type="compositionally biased region" description="Low complexity" evidence="2">
    <location>
        <begin position="39"/>
        <end position="48"/>
    </location>
</feature>
<proteinExistence type="inferred from homology"/>
<name>RL2_SALPK</name>
<accession>B5BGY3</accession>
<sequence>MAVVKCKPTSPGRRHVVKVVNPELHKGKPFAPLVEKNSKSGGRNNNGRITTRHIGGGHKQAYRIVDFKRNKDGIPAVVERLEYDPNRSANIALVLYKDGERRYILAPKGLKAGDQIQSGVDAAIKAGNTLPMRNIPVGSTVHNVEMKPGKGGQLARSAGTYVQIVARDGAYVTLRLRSGEMRKVEADCRATLGEVGNAEHMLRVLGKAGAARWRGVRPTVRGTAMNPVDHPHGGGEGRNFGKHPVTPWGVQTKGKKTRSNKRTDKFIVRRRSK</sequence>
<keyword id="KW-0687">Ribonucleoprotein</keyword>
<keyword id="KW-0689">Ribosomal protein</keyword>
<keyword id="KW-0694">RNA-binding</keyword>
<keyword id="KW-0699">rRNA-binding</keyword>
<reference key="1">
    <citation type="journal article" date="2009" name="BMC Genomics">
        <title>Pseudogene accumulation in the evolutionary histories of Salmonella enterica serovars Paratyphi A and Typhi.</title>
        <authorList>
            <person name="Holt K.E."/>
            <person name="Thomson N.R."/>
            <person name="Wain J."/>
            <person name="Langridge G.C."/>
            <person name="Hasan R."/>
            <person name="Bhutta Z.A."/>
            <person name="Quail M.A."/>
            <person name="Norbertczak H."/>
            <person name="Walker D."/>
            <person name="Simmonds M."/>
            <person name="White B."/>
            <person name="Bason N."/>
            <person name="Mungall K."/>
            <person name="Dougan G."/>
            <person name="Parkhill J."/>
        </authorList>
    </citation>
    <scope>NUCLEOTIDE SEQUENCE [LARGE SCALE GENOMIC DNA]</scope>
    <source>
        <strain>AKU_12601</strain>
    </source>
</reference>
<comment type="function">
    <text evidence="1">One of the primary rRNA binding proteins. Required for association of the 30S and 50S subunits to form the 70S ribosome, for tRNA binding and peptide bond formation. It has been suggested to have peptidyltransferase activity; this is somewhat controversial. Makes several contacts with the 16S rRNA in the 70S ribosome.</text>
</comment>
<comment type="subunit">
    <text evidence="1">Part of the 50S ribosomal subunit. Forms a bridge to the 30S subunit in the 70S ribosome.</text>
</comment>
<comment type="similarity">
    <text evidence="1">Belongs to the universal ribosomal protein uL2 family.</text>
</comment>
<protein>
    <recommendedName>
        <fullName evidence="1">Large ribosomal subunit protein uL2</fullName>
    </recommendedName>
    <alternativeName>
        <fullName evidence="3">50S ribosomal protein L2</fullName>
    </alternativeName>
</protein>
<gene>
    <name evidence="1" type="primary">rplB</name>
    <name type="ordered locus">SSPA3082</name>
</gene>
<evidence type="ECO:0000255" key="1">
    <source>
        <dbReference type="HAMAP-Rule" id="MF_01320"/>
    </source>
</evidence>
<evidence type="ECO:0000256" key="2">
    <source>
        <dbReference type="SAM" id="MobiDB-lite"/>
    </source>
</evidence>
<evidence type="ECO:0000305" key="3"/>
<dbReference type="EMBL" id="FM200053">
    <property type="protein sequence ID" value="CAR61333.1"/>
    <property type="molecule type" value="Genomic_DNA"/>
</dbReference>
<dbReference type="RefSeq" id="WP_000301869.1">
    <property type="nucleotide sequence ID" value="NC_011147.1"/>
</dbReference>
<dbReference type="SMR" id="B5BGY3"/>
<dbReference type="GeneID" id="97393170"/>
<dbReference type="KEGG" id="sek:SSPA3082"/>
<dbReference type="HOGENOM" id="CLU_036235_2_1_6"/>
<dbReference type="Proteomes" id="UP000001869">
    <property type="component" value="Chromosome"/>
</dbReference>
<dbReference type="GO" id="GO:0005829">
    <property type="term" value="C:cytosol"/>
    <property type="evidence" value="ECO:0007669"/>
    <property type="project" value="UniProtKB-ARBA"/>
</dbReference>
<dbReference type="GO" id="GO:0015934">
    <property type="term" value="C:large ribosomal subunit"/>
    <property type="evidence" value="ECO:0007669"/>
    <property type="project" value="InterPro"/>
</dbReference>
<dbReference type="GO" id="GO:0019843">
    <property type="term" value="F:rRNA binding"/>
    <property type="evidence" value="ECO:0007669"/>
    <property type="project" value="UniProtKB-UniRule"/>
</dbReference>
<dbReference type="GO" id="GO:0003735">
    <property type="term" value="F:structural constituent of ribosome"/>
    <property type="evidence" value="ECO:0007669"/>
    <property type="project" value="InterPro"/>
</dbReference>
<dbReference type="GO" id="GO:0016740">
    <property type="term" value="F:transferase activity"/>
    <property type="evidence" value="ECO:0007669"/>
    <property type="project" value="InterPro"/>
</dbReference>
<dbReference type="GO" id="GO:0002181">
    <property type="term" value="P:cytoplasmic translation"/>
    <property type="evidence" value="ECO:0007669"/>
    <property type="project" value="TreeGrafter"/>
</dbReference>
<dbReference type="FunFam" id="2.30.30.30:FF:000001">
    <property type="entry name" value="50S ribosomal protein L2"/>
    <property type="match status" value="1"/>
</dbReference>
<dbReference type="FunFam" id="2.40.50.140:FF:000003">
    <property type="entry name" value="50S ribosomal protein L2"/>
    <property type="match status" value="1"/>
</dbReference>
<dbReference type="FunFam" id="4.10.950.10:FF:000001">
    <property type="entry name" value="50S ribosomal protein L2"/>
    <property type="match status" value="1"/>
</dbReference>
<dbReference type="Gene3D" id="2.30.30.30">
    <property type="match status" value="1"/>
</dbReference>
<dbReference type="Gene3D" id="2.40.50.140">
    <property type="entry name" value="Nucleic acid-binding proteins"/>
    <property type="match status" value="1"/>
</dbReference>
<dbReference type="Gene3D" id="4.10.950.10">
    <property type="entry name" value="Ribosomal protein L2, domain 3"/>
    <property type="match status" value="1"/>
</dbReference>
<dbReference type="HAMAP" id="MF_01320_B">
    <property type="entry name" value="Ribosomal_uL2_B"/>
    <property type="match status" value="1"/>
</dbReference>
<dbReference type="InterPro" id="IPR012340">
    <property type="entry name" value="NA-bd_OB-fold"/>
</dbReference>
<dbReference type="InterPro" id="IPR014722">
    <property type="entry name" value="Rib_uL2_dom2"/>
</dbReference>
<dbReference type="InterPro" id="IPR002171">
    <property type="entry name" value="Ribosomal_uL2"/>
</dbReference>
<dbReference type="InterPro" id="IPR005880">
    <property type="entry name" value="Ribosomal_uL2_bac/org-type"/>
</dbReference>
<dbReference type="InterPro" id="IPR022669">
    <property type="entry name" value="Ribosomal_uL2_C"/>
</dbReference>
<dbReference type="InterPro" id="IPR022671">
    <property type="entry name" value="Ribosomal_uL2_CS"/>
</dbReference>
<dbReference type="InterPro" id="IPR014726">
    <property type="entry name" value="Ribosomal_uL2_dom3"/>
</dbReference>
<dbReference type="InterPro" id="IPR022666">
    <property type="entry name" value="Ribosomal_uL2_RNA-bd_dom"/>
</dbReference>
<dbReference type="InterPro" id="IPR008991">
    <property type="entry name" value="Translation_prot_SH3-like_sf"/>
</dbReference>
<dbReference type="NCBIfam" id="TIGR01171">
    <property type="entry name" value="rplB_bact"/>
    <property type="match status" value="1"/>
</dbReference>
<dbReference type="PANTHER" id="PTHR13691:SF5">
    <property type="entry name" value="LARGE RIBOSOMAL SUBUNIT PROTEIN UL2M"/>
    <property type="match status" value="1"/>
</dbReference>
<dbReference type="PANTHER" id="PTHR13691">
    <property type="entry name" value="RIBOSOMAL PROTEIN L2"/>
    <property type="match status" value="1"/>
</dbReference>
<dbReference type="Pfam" id="PF00181">
    <property type="entry name" value="Ribosomal_L2"/>
    <property type="match status" value="1"/>
</dbReference>
<dbReference type="Pfam" id="PF03947">
    <property type="entry name" value="Ribosomal_L2_C"/>
    <property type="match status" value="1"/>
</dbReference>
<dbReference type="PIRSF" id="PIRSF002158">
    <property type="entry name" value="Ribosomal_L2"/>
    <property type="match status" value="1"/>
</dbReference>
<dbReference type="SMART" id="SM01383">
    <property type="entry name" value="Ribosomal_L2"/>
    <property type="match status" value="1"/>
</dbReference>
<dbReference type="SMART" id="SM01382">
    <property type="entry name" value="Ribosomal_L2_C"/>
    <property type="match status" value="1"/>
</dbReference>
<dbReference type="SUPFAM" id="SSF50249">
    <property type="entry name" value="Nucleic acid-binding proteins"/>
    <property type="match status" value="1"/>
</dbReference>
<dbReference type="SUPFAM" id="SSF50104">
    <property type="entry name" value="Translation proteins SH3-like domain"/>
    <property type="match status" value="1"/>
</dbReference>
<dbReference type="PROSITE" id="PS00467">
    <property type="entry name" value="RIBOSOMAL_L2"/>
    <property type="match status" value="1"/>
</dbReference>